<comment type="function">
    <text evidence="1">Catalyzes the formation of archaetidylinositol phosphate (AIP) from CDP-archaeol (CDP-ArOH or CDP-2,3-bis-(O-phytanyl)-sn-glycerol) and 1L-myo-inositol 1-phosphate (IP or 1D-myo-inositol 3-phosphate). AIP is a precursor of archaetidyl-myo-inositol (AI), an ether-type inositol phospholipid ubiquitously distributed in archaea membranes and essential for glycolipid biosynthesis in archaea.</text>
</comment>
<comment type="catalytic activity">
    <reaction evidence="1">
        <text>CDP-2,3-bis-O-(phytanyl)-sn-glycerol + 1D-myo-inositol 3-phosphate = saturated 1-archaetidyl-1D-myo-inositol 3-phosphate + CMP + H(+)</text>
        <dbReference type="Rhea" id="RHEA:36823"/>
        <dbReference type="ChEBI" id="CHEBI:15378"/>
        <dbReference type="ChEBI" id="CHEBI:58401"/>
        <dbReference type="ChEBI" id="CHEBI:60377"/>
        <dbReference type="ChEBI" id="CHEBI:74004"/>
        <dbReference type="ChEBI" id="CHEBI:74006"/>
        <dbReference type="EC" id="2.7.8.39"/>
    </reaction>
</comment>
<comment type="cofactor">
    <cofactor evidence="1">
        <name>Mn(2+)</name>
        <dbReference type="ChEBI" id="CHEBI:29035"/>
    </cofactor>
    <cofactor evidence="1">
        <name>Mg(2+)</name>
        <dbReference type="ChEBI" id="CHEBI:18420"/>
    </cofactor>
    <text evidence="1">Binds 2 Mg(2+) or Mn(2+) ions per subunit.</text>
</comment>
<comment type="pathway">
    <text evidence="1">Lipid metabolism; phospholipid metabolism.</text>
</comment>
<comment type="subcellular location">
    <subcellularLocation>
        <location evidence="3">Cell membrane</location>
        <topology evidence="3">Multi-pass membrane protein</topology>
    </subcellularLocation>
</comment>
<comment type="similarity">
    <text evidence="4 5">Belongs to the CDP-alcohol phosphatidyltransferase class-I family.</text>
</comment>
<evidence type="ECO:0000250" key="1">
    <source>
        <dbReference type="UniProtKB" id="O27726"/>
    </source>
</evidence>
<evidence type="ECO:0000250" key="2">
    <source>
        <dbReference type="UniProtKB" id="P9WPG7"/>
    </source>
</evidence>
<evidence type="ECO:0000255" key="3"/>
<evidence type="ECO:0000255" key="4">
    <source>
        <dbReference type="HAMAP-Rule" id="MF_02242"/>
    </source>
</evidence>
<evidence type="ECO:0000305" key="5"/>
<protein>
    <recommendedName>
        <fullName evidence="1">Archaetidylinositol phosphate synthase</fullName>
        <shortName evidence="1">AIP synthase</shortName>
        <ecNumber evidence="1">2.7.8.39</ecNumber>
    </recommendedName>
</protein>
<name>AIPS_PYRHO</name>
<accession>O58215</accession>
<reference key="1">
    <citation type="journal article" date="1998" name="DNA Res.">
        <title>Complete sequence and gene organization of the genome of a hyper-thermophilic archaebacterium, Pyrococcus horikoshii OT3.</title>
        <authorList>
            <person name="Kawarabayasi Y."/>
            <person name="Sawada M."/>
            <person name="Horikawa H."/>
            <person name="Haikawa Y."/>
            <person name="Hino Y."/>
            <person name="Yamamoto S."/>
            <person name="Sekine M."/>
            <person name="Baba S."/>
            <person name="Kosugi H."/>
            <person name="Hosoyama A."/>
            <person name="Nagai Y."/>
            <person name="Sakai M."/>
            <person name="Ogura K."/>
            <person name="Otsuka R."/>
            <person name="Nakazawa H."/>
            <person name="Takamiya M."/>
            <person name="Ohfuku Y."/>
            <person name="Funahashi T."/>
            <person name="Tanaka T."/>
            <person name="Kudoh Y."/>
            <person name="Yamazaki J."/>
            <person name="Kushida N."/>
            <person name="Oguchi A."/>
            <person name="Aoki K."/>
            <person name="Yoshizawa T."/>
            <person name="Nakamura Y."/>
            <person name="Robb F.T."/>
            <person name="Horikoshi K."/>
            <person name="Masuchi Y."/>
            <person name="Shizuya H."/>
            <person name="Kikuchi H."/>
        </authorList>
    </citation>
    <scope>NUCLEOTIDE SEQUENCE [LARGE SCALE GENOMIC DNA]</scope>
    <source>
        <strain>ATCC 700860 / DSM 12428 / JCM 9974 / NBRC 100139 / OT-3</strain>
    </source>
</reference>
<dbReference type="EC" id="2.7.8.39" evidence="1"/>
<dbReference type="EMBL" id="BA000001">
    <property type="protein sequence ID" value="BAA29546.1"/>
    <property type="molecule type" value="Genomic_DNA"/>
</dbReference>
<dbReference type="PIR" id="E71157">
    <property type="entry name" value="E71157"/>
</dbReference>
<dbReference type="RefSeq" id="WP_010884567.1">
    <property type="nucleotide sequence ID" value="NC_000961.1"/>
</dbReference>
<dbReference type="SMR" id="O58215"/>
<dbReference type="STRING" id="70601.gene:9377391"/>
<dbReference type="DNASU" id="1444354"/>
<dbReference type="EnsemblBacteria" id="BAA29546">
    <property type="protein sequence ID" value="BAA29546"/>
    <property type="gene ID" value="BAA29546"/>
</dbReference>
<dbReference type="GeneID" id="1444354"/>
<dbReference type="KEGG" id="pho:PH0460"/>
<dbReference type="eggNOG" id="arCOG00670">
    <property type="taxonomic scope" value="Archaea"/>
</dbReference>
<dbReference type="OrthoDB" id="9904at2157"/>
<dbReference type="UniPathway" id="UPA00085"/>
<dbReference type="Proteomes" id="UP000000752">
    <property type="component" value="Chromosome"/>
</dbReference>
<dbReference type="GO" id="GO:0005886">
    <property type="term" value="C:plasma membrane"/>
    <property type="evidence" value="ECO:0007669"/>
    <property type="project" value="UniProtKB-SubCell"/>
</dbReference>
<dbReference type="GO" id="GO:0000287">
    <property type="term" value="F:magnesium ion binding"/>
    <property type="evidence" value="ECO:0007669"/>
    <property type="project" value="UniProtKB-UniRule"/>
</dbReference>
<dbReference type="GO" id="GO:0016780">
    <property type="term" value="F:phosphotransferase activity, for other substituted phosphate groups"/>
    <property type="evidence" value="ECO:0007669"/>
    <property type="project" value="UniProtKB-UniRule"/>
</dbReference>
<dbReference type="GO" id="GO:0008654">
    <property type="term" value="P:phospholipid biosynthetic process"/>
    <property type="evidence" value="ECO:0007669"/>
    <property type="project" value="UniProtKB-UniRule"/>
</dbReference>
<dbReference type="Gene3D" id="1.20.120.1760">
    <property type="match status" value="1"/>
</dbReference>
<dbReference type="HAMAP" id="MF_02242">
    <property type="entry name" value="AIP_synthase"/>
    <property type="match status" value="1"/>
</dbReference>
<dbReference type="InterPro" id="IPR044270">
    <property type="entry name" value="AIP_synthase"/>
</dbReference>
<dbReference type="InterPro" id="IPR054868">
    <property type="entry name" value="archin_ph_syn"/>
</dbReference>
<dbReference type="InterPro" id="IPR000462">
    <property type="entry name" value="CDP-OH_P_trans"/>
</dbReference>
<dbReference type="InterPro" id="IPR043130">
    <property type="entry name" value="CDP-OH_PTrfase_TM_dom"/>
</dbReference>
<dbReference type="InterPro" id="IPR048254">
    <property type="entry name" value="CDP_ALCOHOL_P_TRANSF_CS"/>
</dbReference>
<dbReference type="NCBIfam" id="NF040950">
    <property type="entry name" value="archin_ph_syn"/>
    <property type="match status" value="1"/>
</dbReference>
<dbReference type="Pfam" id="PF01066">
    <property type="entry name" value="CDP-OH_P_transf"/>
    <property type="match status" value="1"/>
</dbReference>
<dbReference type="PROSITE" id="PS00379">
    <property type="entry name" value="CDP_ALCOHOL_P_TRANSF"/>
    <property type="match status" value="1"/>
</dbReference>
<proteinExistence type="inferred from homology"/>
<feature type="chain" id="PRO_0000056822" description="Archaetidylinositol phosphate synthase">
    <location>
        <begin position="1"/>
        <end position="188"/>
    </location>
</feature>
<feature type="transmembrane region" description="Helical" evidence="3">
    <location>
        <begin position="20"/>
        <end position="40"/>
    </location>
</feature>
<feature type="transmembrane region" description="Helical" evidence="3">
    <location>
        <begin position="51"/>
        <end position="71"/>
    </location>
</feature>
<feature type="transmembrane region" description="Helical" evidence="3">
    <location>
        <begin position="96"/>
        <end position="116"/>
    </location>
</feature>
<feature type="transmembrane region" description="Helical" evidence="3">
    <location>
        <begin position="147"/>
        <end position="167"/>
    </location>
</feature>
<feature type="active site" description="Proton acceptor" evidence="2">
    <location>
        <position position="89"/>
    </location>
</feature>
<feature type="binding site" evidence="2">
    <location>
        <position position="64"/>
    </location>
    <ligand>
        <name>Mg(2+)</name>
        <dbReference type="ChEBI" id="CHEBI:18420"/>
        <label>1</label>
    </ligand>
</feature>
<feature type="binding site" evidence="2">
    <location>
        <position position="64"/>
    </location>
    <ligand>
        <name>Mg(2+)</name>
        <dbReference type="ChEBI" id="CHEBI:18420"/>
        <label>2</label>
    </ligand>
</feature>
<feature type="binding site" evidence="2">
    <location>
        <position position="67"/>
    </location>
    <ligand>
        <name>Mg(2+)</name>
        <dbReference type="ChEBI" id="CHEBI:18420"/>
        <label>1</label>
    </ligand>
</feature>
<feature type="binding site" evidence="2">
    <location>
        <position position="85"/>
    </location>
    <ligand>
        <name>Mg(2+)</name>
        <dbReference type="ChEBI" id="CHEBI:18420"/>
        <label>1</label>
    </ligand>
</feature>
<feature type="binding site" evidence="2">
    <location>
        <position position="85"/>
    </location>
    <ligand>
        <name>Mg(2+)</name>
        <dbReference type="ChEBI" id="CHEBI:18420"/>
        <label>2</label>
    </ligand>
</feature>
<feature type="binding site" evidence="2">
    <location>
        <position position="89"/>
    </location>
    <ligand>
        <name>Mg(2+)</name>
        <dbReference type="ChEBI" id="CHEBI:18420"/>
        <label>2</label>
    </ligand>
</feature>
<gene>
    <name type="ordered locus">PH0460</name>
</gene>
<organism>
    <name type="scientific">Pyrococcus horikoshii (strain ATCC 700860 / DSM 12428 / JCM 9974 / NBRC 100139 / OT-3)</name>
    <dbReference type="NCBI Taxonomy" id="70601"/>
    <lineage>
        <taxon>Archaea</taxon>
        <taxon>Methanobacteriati</taxon>
        <taxon>Methanobacteriota</taxon>
        <taxon>Thermococci</taxon>
        <taxon>Thermococcales</taxon>
        <taxon>Thermococcaceae</taxon>
        <taxon>Pyrococcus</taxon>
    </lineage>
</organism>
<keyword id="KW-1003">Cell membrane</keyword>
<keyword id="KW-0444">Lipid biosynthesis</keyword>
<keyword id="KW-0443">Lipid metabolism</keyword>
<keyword id="KW-0460">Magnesium</keyword>
<keyword id="KW-0464">Manganese</keyword>
<keyword id="KW-0472">Membrane</keyword>
<keyword id="KW-0479">Metal-binding</keyword>
<keyword id="KW-1208">Phospholipid metabolism</keyword>
<keyword id="KW-0808">Transferase</keyword>
<keyword id="KW-0812">Transmembrane</keyword>
<keyword id="KW-1133">Transmembrane helix</keyword>
<sequence length="188" mass="20418">MLSKIRPKVKQPLERIGKTLASLGITPNQLTIIGFLITLLASYEFYLQNQILAGIILAVGAFLDALDGALARATGKVSKFGGFLDSTIDRLSDASILFGIALGGLVRWDVTFLTLIGSYMVSYSRCRAELAGSGTLAIGIAERGERIIIIFIASLFNAVKIGVYLVAILSWITFIQRVYEAKKRLEMG</sequence>